<protein>
    <recommendedName>
        <fullName>Olfactory receptor 5AK2</fullName>
    </recommendedName>
</protein>
<organism>
    <name type="scientific">Homo sapiens</name>
    <name type="common">Human</name>
    <dbReference type="NCBI Taxonomy" id="9606"/>
    <lineage>
        <taxon>Eukaryota</taxon>
        <taxon>Metazoa</taxon>
        <taxon>Chordata</taxon>
        <taxon>Craniata</taxon>
        <taxon>Vertebrata</taxon>
        <taxon>Euteleostomi</taxon>
        <taxon>Mammalia</taxon>
        <taxon>Eutheria</taxon>
        <taxon>Euarchontoglires</taxon>
        <taxon>Primates</taxon>
        <taxon>Haplorrhini</taxon>
        <taxon>Catarrhini</taxon>
        <taxon>Hominidae</taxon>
        <taxon>Homo</taxon>
    </lineage>
</organism>
<sequence>MTLGNSTEVTEFYLLGFGAQHEFWCILFIVFLLIYVTSIMGNSGIILLINTDSRFQTLTYFFLQHLAFVDICYTSAITPKMLQSFTEEKNLMLFQGCVIQFLVYATFATSDCYLLAMMAVDPYVAICKPLHYTVIMSRTVCIRLVAGSYIMGSINASVQTGFTCSLSFCKSNSINHFFCDVPPILALSCSNVDINIMLLVVFVGSNLIFTGLVVIFSYIYIMATILKMSSSAGRKKSFSTCASHLTAVTIFYGTLSYMYLQSHSNNSQENMKVAFIFYGTVIPMLNPLIYSLRNKEVKEALKVIGKKLF</sequence>
<evidence type="ECO:0000255" key="1"/>
<evidence type="ECO:0000255" key="2">
    <source>
        <dbReference type="PROSITE-ProRule" id="PRU00521"/>
    </source>
</evidence>
<evidence type="ECO:0000269" key="3">
    <source>
    </source>
</evidence>
<evidence type="ECO:0000305" key="4"/>
<name>O5AK2_HUMAN</name>
<proteinExistence type="evidence at transcript level"/>
<comment type="function">
    <text evidence="4">Odorant receptor.</text>
</comment>
<comment type="subcellular location">
    <subcellularLocation>
        <location>Cell membrane</location>
        <topology>Multi-pass membrane protein</topology>
    </subcellularLocation>
</comment>
<comment type="similarity">
    <text evidence="2">Belongs to the G-protein coupled receptor 1 family.</text>
</comment>
<comment type="online information" name="Human Olfactory Receptor Data Exploratorium (HORDE)">
    <link uri="http://genome.weizmann.ac.il/horde/card/index/symbol:OR5AK2"/>
</comment>
<accession>Q8NH90</accession>
<accession>B2RNZ9</accession>
<dbReference type="EMBL" id="AB065496">
    <property type="protein sequence ID" value="BAC05747.1"/>
    <property type="molecule type" value="Genomic_DNA"/>
</dbReference>
<dbReference type="EMBL" id="BC137198">
    <property type="protein sequence ID" value="AAI37199.1"/>
    <property type="molecule type" value="mRNA"/>
</dbReference>
<dbReference type="CCDS" id="CCDS31538.1"/>
<dbReference type="RefSeq" id="NP_001005323.1">
    <property type="nucleotide sequence ID" value="NM_001005323.1"/>
</dbReference>
<dbReference type="SMR" id="Q8NH90"/>
<dbReference type="FunCoup" id="Q8NH90">
    <property type="interactions" value="417"/>
</dbReference>
<dbReference type="STRING" id="9606.ENSP00000322784"/>
<dbReference type="GlyCosmos" id="Q8NH90">
    <property type="glycosylation" value="3 sites, No reported glycans"/>
</dbReference>
<dbReference type="GlyGen" id="Q8NH90">
    <property type="glycosylation" value="3 sites"/>
</dbReference>
<dbReference type="BioMuta" id="OR5AK2"/>
<dbReference type="DMDM" id="38372829"/>
<dbReference type="MassIVE" id="Q8NH90"/>
<dbReference type="PaxDb" id="9606-ENSP00000322784"/>
<dbReference type="PeptideAtlas" id="Q8NH90"/>
<dbReference type="ProteomicsDB" id="73687"/>
<dbReference type="Antibodypedia" id="66686">
    <property type="antibodies" value="58 antibodies from 15 providers"/>
</dbReference>
<dbReference type="DNASU" id="390181"/>
<dbReference type="Ensembl" id="ENST00000326855.3">
    <property type="protein sequence ID" value="ENSP00000322784.2"/>
    <property type="gene ID" value="ENSG00000181273.3"/>
</dbReference>
<dbReference type="GeneID" id="390181"/>
<dbReference type="KEGG" id="hsa:390181"/>
<dbReference type="MANE-Select" id="ENST00000326855.3">
    <property type="protein sequence ID" value="ENSP00000322784.2"/>
    <property type="RefSeq nucleotide sequence ID" value="NM_001005323.1"/>
    <property type="RefSeq protein sequence ID" value="NP_001005323.1"/>
</dbReference>
<dbReference type="UCSC" id="uc010rjp.3">
    <property type="organism name" value="human"/>
</dbReference>
<dbReference type="AGR" id="HGNC:15251"/>
<dbReference type="CTD" id="390181"/>
<dbReference type="GeneCards" id="OR5AK2"/>
<dbReference type="HGNC" id="HGNC:15251">
    <property type="gene designation" value="OR5AK2"/>
</dbReference>
<dbReference type="HPA" id="ENSG00000181273">
    <property type="expression patterns" value="Tissue enriched (lymphoid)"/>
</dbReference>
<dbReference type="neXtProt" id="NX_Q8NH90"/>
<dbReference type="PharmGKB" id="PA32460"/>
<dbReference type="VEuPathDB" id="HostDB:ENSG00000181273"/>
<dbReference type="eggNOG" id="ENOG502RF3K">
    <property type="taxonomic scope" value="Eukaryota"/>
</dbReference>
<dbReference type="GeneTree" id="ENSGT01120000271832"/>
<dbReference type="HOGENOM" id="CLU_012526_1_0_1"/>
<dbReference type="InParanoid" id="Q8NH90"/>
<dbReference type="OMA" id="GAQHEFW"/>
<dbReference type="OrthoDB" id="9442673at2759"/>
<dbReference type="PAN-GO" id="Q8NH90">
    <property type="GO annotations" value="4 GO annotations based on evolutionary models"/>
</dbReference>
<dbReference type="PhylomeDB" id="Q8NH90"/>
<dbReference type="TreeFam" id="TF352756"/>
<dbReference type="PathwayCommons" id="Q8NH90"/>
<dbReference type="Reactome" id="R-HSA-9752946">
    <property type="pathway name" value="Expression and translocation of olfactory receptors"/>
</dbReference>
<dbReference type="BioGRID-ORCS" id="390181">
    <property type="hits" value="9 hits in 697 CRISPR screens"/>
</dbReference>
<dbReference type="GeneWiki" id="OR5AK2"/>
<dbReference type="GenomeRNAi" id="390181"/>
<dbReference type="Pharos" id="Q8NH90">
    <property type="development level" value="Tdark"/>
</dbReference>
<dbReference type="PRO" id="PR:Q8NH90"/>
<dbReference type="Proteomes" id="UP000005640">
    <property type="component" value="Chromosome 11"/>
</dbReference>
<dbReference type="RNAct" id="Q8NH90">
    <property type="molecule type" value="protein"/>
</dbReference>
<dbReference type="Bgee" id="ENSG00000181273">
    <property type="expression patterns" value="Expressed in spleen and 8 other cell types or tissues"/>
</dbReference>
<dbReference type="ExpressionAtlas" id="Q8NH90">
    <property type="expression patterns" value="baseline and differential"/>
</dbReference>
<dbReference type="GO" id="GO:0005886">
    <property type="term" value="C:plasma membrane"/>
    <property type="evidence" value="ECO:0007669"/>
    <property type="project" value="UniProtKB-SubCell"/>
</dbReference>
<dbReference type="GO" id="GO:0004930">
    <property type="term" value="F:G protein-coupled receptor activity"/>
    <property type="evidence" value="ECO:0007669"/>
    <property type="project" value="UniProtKB-KW"/>
</dbReference>
<dbReference type="GO" id="GO:0005549">
    <property type="term" value="F:odorant binding"/>
    <property type="evidence" value="ECO:0000318"/>
    <property type="project" value="GO_Central"/>
</dbReference>
<dbReference type="GO" id="GO:0004984">
    <property type="term" value="F:olfactory receptor activity"/>
    <property type="evidence" value="ECO:0000318"/>
    <property type="project" value="GO_Central"/>
</dbReference>
<dbReference type="GO" id="GO:0007186">
    <property type="term" value="P:G protein-coupled receptor signaling pathway"/>
    <property type="evidence" value="ECO:0000318"/>
    <property type="project" value="GO_Central"/>
</dbReference>
<dbReference type="GO" id="GO:0007608">
    <property type="term" value="P:sensory perception of smell"/>
    <property type="evidence" value="ECO:0000318"/>
    <property type="project" value="GO_Central"/>
</dbReference>
<dbReference type="FunFam" id="1.10.1220.70:FF:000001">
    <property type="entry name" value="Olfactory receptor"/>
    <property type="match status" value="1"/>
</dbReference>
<dbReference type="FunFam" id="1.20.1070.10:FF:000003">
    <property type="entry name" value="Olfactory receptor"/>
    <property type="match status" value="1"/>
</dbReference>
<dbReference type="Gene3D" id="1.20.1070.10">
    <property type="entry name" value="Rhodopsin 7-helix transmembrane proteins"/>
    <property type="match status" value="1"/>
</dbReference>
<dbReference type="InterPro" id="IPR000276">
    <property type="entry name" value="GPCR_Rhodpsn"/>
</dbReference>
<dbReference type="InterPro" id="IPR017452">
    <property type="entry name" value="GPCR_Rhodpsn_7TM"/>
</dbReference>
<dbReference type="InterPro" id="IPR000725">
    <property type="entry name" value="Olfact_rcpt"/>
</dbReference>
<dbReference type="PANTHER" id="PTHR48018">
    <property type="entry name" value="OLFACTORY RECEPTOR"/>
    <property type="match status" value="1"/>
</dbReference>
<dbReference type="Pfam" id="PF13853">
    <property type="entry name" value="7tm_4"/>
    <property type="match status" value="1"/>
</dbReference>
<dbReference type="PRINTS" id="PR00237">
    <property type="entry name" value="GPCRRHODOPSN"/>
</dbReference>
<dbReference type="PRINTS" id="PR00245">
    <property type="entry name" value="OLFACTORYR"/>
</dbReference>
<dbReference type="SUPFAM" id="SSF81321">
    <property type="entry name" value="Family A G protein-coupled receptor-like"/>
    <property type="match status" value="1"/>
</dbReference>
<dbReference type="PROSITE" id="PS50262">
    <property type="entry name" value="G_PROTEIN_RECEP_F1_2"/>
    <property type="match status" value="1"/>
</dbReference>
<reference key="1">
    <citation type="submission" date="2001-07" db="EMBL/GenBank/DDBJ databases">
        <title>Genome-wide discovery and analysis of human seven transmembrane helix receptor genes.</title>
        <authorList>
            <person name="Suwa M."/>
            <person name="Sato T."/>
            <person name="Okouchi I."/>
            <person name="Arita M."/>
            <person name="Futami K."/>
            <person name="Matsumoto S."/>
            <person name="Tsutsumi S."/>
            <person name="Aburatani H."/>
            <person name="Asai K."/>
            <person name="Akiyama Y."/>
        </authorList>
    </citation>
    <scope>NUCLEOTIDE SEQUENCE [GENOMIC DNA]</scope>
</reference>
<reference key="2">
    <citation type="journal article" date="2004" name="Genome Res.">
        <title>The status, quality, and expansion of the NIH full-length cDNA project: the Mammalian Gene Collection (MGC).</title>
        <authorList>
            <consortium name="The MGC Project Team"/>
        </authorList>
    </citation>
    <scope>NUCLEOTIDE SEQUENCE [LARGE SCALE MRNA]</scope>
    <scope>VARIANT ILE-92</scope>
</reference>
<gene>
    <name type="primary">OR5AK2</name>
</gene>
<keyword id="KW-1003">Cell membrane</keyword>
<keyword id="KW-1015">Disulfide bond</keyword>
<keyword id="KW-0297">G-protein coupled receptor</keyword>
<keyword id="KW-0325">Glycoprotein</keyword>
<keyword id="KW-0472">Membrane</keyword>
<keyword id="KW-0552">Olfaction</keyword>
<keyword id="KW-0675">Receptor</keyword>
<keyword id="KW-1185">Reference proteome</keyword>
<keyword id="KW-0716">Sensory transduction</keyword>
<keyword id="KW-0807">Transducer</keyword>
<keyword id="KW-0812">Transmembrane</keyword>
<keyword id="KW-1133">Transmembrane helix</keyword>
<feature type="chain" id="PRO_0000150575" description="Olfactory receptor 5AK2">
    <location>
        <begin position="1"/>
        <end position="309"/>
    </location>
</feature>
<feature type="topological domain" description="Extracellular" evidence="1">
    <location>
        <begin position="1"/>
        <end position="25"/>
    </location>
</feature>
<feature type="transmembrane region" description="Helical; Name=1" evidence="1">
    <location>
        <begin position="26"/>
        <end position="46"/>
    </location>
</feature>
<feature type="topological domain" description="Cytoplasmic" evidence="1">
    <location>
        <begin position="47"/>
        <end position="54"/>
    </location>
</feature>
<feature type="transmembrane region" description="Helical; Name=2" evidence="1">
    <location>
        <begin position="55"/>
        <end position="75"/>
    </location>
</feature>
<feature type="topological domain" description="Extracellular" evidence="1">
    <location>
        <begin position="76"/>
        <end position="99"/>
    </location>
</feature>
<feature type="transmembrane region" description="Helical; Name=3" evidence="1">
    <location>
        <begin position="100"/>
        <end position="120"/>
    </location>
</feature>
<feature type="topological domain" description="Cytoplasmic" evidence="1">
    <location>
        <begin position="121"/>
        <end position="133"/>
    </location>
</feature>
<feature type="transmembrane region" description="Helical; Name=4" evidence="1">
    <location>
        <begin position="134"/>
        <end position="154"/>
    </location>
</feature>
<feature type="topological domain" description="Extracellular" evidence="1">
    <location>
        <begin position="155"/>
        <end position="196"/>
    </location>
</feature>
<feature type="transmembrane region" description="Helical; Name=5" evidence="1">
    <location>
        <begin position="197"/>
        <end position="217"/>
    </location>
</feature>
<feature type="topological domain" description="Cytoplasmic" evidence="1">
    <location>
        <begin position="218"/>
        <end position="237"/>
    </location>
</feature>
<feature type="transmembrane region" description="Helical; Name=6" evidence="1">
    <location>
        <begin position="238"/>
        <end position="258"/>
    </location>
</feature>
<feature type="topological domain" description="Extracellular" evidence="1">
    <location>
        <begin position="259"/>
        <end position="271"/>
    </location>
</feature>
<feature type="transmembrane region" description="Helical; Name=7" evidence="1">
    <location>
        <begin position="272"/>
        <end position="292"/>
    </location>
</feature>
<feature type="topological domain" description="Cytoplasmic" evidence="1">
    <location>
        <begin position="293"/>
        <end position="309"/>
    </location>
</feature>
<feature type="glycosylation site" description="N-linked (GlcNAc...) asparagine" evidence="1">
    <location>
        <position position="5"/>
    </location>
</feature>
<feature type="glycosylation site" description="N-linked (GlcNAc...) asparagine" evidence="1">
    <location>
        <position position="155"/>
    </location>
</feature>
<feature type="glycosylation site" description="N-linked (GlcNAc...) asparagine" evidence="1">
    <location>
        <position position="265"/>
    </location>
</feature>
<feature type="disulfide bond" evidence="2">
    <location>
        <begin position="97"/>
        <end position="189"/>
    </location>
</feature>
<feature type="sequence variant" id="VAR_034215" description="In dbSNP:rs10896563.">
    <original>G</original>
    <variation>V</variation>
    <location>
        <position position="4"/>
    </location>
</feature>
<feature type="sequence variant" id="VAR_060007" description="In dbSNP:rs12420424.">
    <original>S</original>
    <variation>T</variation>
    <location>
        <position position="43"/>
    </location>
</feature>
<feature type="sequence variant" id="VAR_034216" description="In dbSNP:rs2853083." evidence="3">
    <original>M</original>
    <variation>I</variation>
    <location>
        <position position="92"/>
    </location>
</feature>